<gene>
    <name evidence="1" type="primary">rplD</name>
    <name type="ordered locus">SBO_3313</name>
</gene>
<proteinExistence type="inferred from homology"/>
<keyword id="KW-0687">Ribonucleoprotein</keyword>
<keyword id="KW-0689">Ribosomal protein</keyword>
<keyword id="KW-0694">RNA-binding</keyword>
<keyword id="KW-0699">rRNA-binding</keyword>
<feature type="chain" id="PRO_0000242436" description="Large ribosomal subunit protein uL4">
    <location>
        <begin position="1"/>
        <end position="201"/>
    </location>
</feature>
<feature type="region of interest" description="Disordered" evidence="2">
    <location>
        <begin position="44"/>
        <end position="71"/>
    </location>
</feature>
<dbReference type="EMBL" id="CP000036">
    <property type="protein sequence ID" value="ABB67801.1"/>
    <property type="molecule type" value="Genomic_DNA"/>
</dbReference>
<dbReference type="RefSeq" id="WP_000424395.1">
    <property type="nucleotide sequence ID" value="NC_007613.1"/>
</dbReference>
<dbReference type="SMR" id="Q31VV7"/>
<dbReference type="GeneID" id="97442859"/>
<dbReference type="KEGG" id="sbo:SBO_3313"/>
<dbReference type="HOGENOM" id="CLU_041575_5_2_6"/>
<dbReference type="Proteomes" id="UP000007067">
    <property type="component" value="Chromosome"/>
</dbReference>
<dbReference type="GO" id="GO:1990904">
    <property type="term" value="C:ribonucleoprotein complex"/>
    <property type="evidence" value="ECO:0007669"/>
    <property type="project" value="UniProtKB-KW"/>
</dbReference>
<dbReference type="GO" id="GO:0005840">
    <property type="term" value="C:ribosome"/>
    <property type="evidence" value="ECO:0007669"/>
    <property type="project" value="UniProtKB-KW"/>
</dbReference>
<dbReference type="GO" id="GO:0019843">
    <property type="term" value="F:rRNA binding"/>
    <property type="evidence" value="ECO:0007669"/>
    <property type="project" value="UniProtKB-UniRule"/>
</dbReference>
<dbReference type="GO" id="GO:0003735">
    <property type="term" value="F:structural constituent of ribosome"/>
    <property type="evidence" value="ECO:0007669"/>
    <property type="project" value="InterPro"/>
</dbReference>
<dbReference type="GO" id="GO:0006412">
    <property type="term" value="P:translation"/>
    <property type="evidence" value="ECO:0007669"/>
    <property type="project" value="UniProtKB-UniRule"/>
</dbReference>
<dbReference type="FunFam" id="3.40.1370.10:FF:000001">
    <property type="entry name" value="50S ribosomal protein L4"/>
    <property type="match status" value="1"/>
</dbReference>
<dbReference type="Gene3D" id="3.40.1370.10">
    <property type="match status" value="1"/>
</dbReference>
<dbReference type="HAMAP" id="MF_01328_B">
    <property type="entry name" value="Ribosomal_uL4_B"/>
    <property type="match status" value="1"/>
</dbReference>
<dbReference type="InterPro" id="IPR002136">
    <property type="entry name" value="Ribosomal_uL4"/>
</dbReference>
<dbReference type="InterPro" id="IPR013005">
    <property type="entry name" value="Ribosomal_uL4-like"/>
</dbReference>
<dbReference type="InterPro" id="IPR023574">
    <property type="entry name" value="Ribosomal_uL4_dom_sf"/>
</dbReference>
<dbReference type="NCBIfam" id="TIGR03953">
    <property type="entry name" value="rplD_bact"/>
    <property type="match status" value="1"/>
</dbReference>
<dbReference type="PANTHER" id="PTHR10746">
    <property type="entry name" value="50S RIBOSOMAL PROTEIN L4"/>
    <property type="match status" value="1"/>
</dbReference>
<dbReference type="PANTHER" id="PTHR10746:SF6">
    <property type="entry name" value="LARGE RIBOSOMAL SUBUNIT PROTEIN UL4M"/>
    <property type="match status" value="1"/>
</dbReference>
<dbReference type="Pfam" id="PF00573">
    <property type="entry name" value="Ribosomal_L4"/>
    <property type="match status" value="1"/>
</dbReference>
<dbReference type="SUPFAM" id="SSF52166">
    <property type="entry name" value="Ribosomal protein L4"/>
    <property type="match status" value="1"/>
</dbReference>
<evidence type="ECO:0000255" key="1">
    <source>
        <dbReference type="HAMAP-Rule" id="MF_01328"/>
    </source>
</evidence>
<evidence type="ECO:0000256" key="2">
    <source>
        <dbReference type="SAM" id="MobiDB-lite"/>
    </source>
</evidence>
<evidence type="ECO:0000305" key="3"/>
<organism>
    <name type="scientific">Shigella boydii serotype 4 (strain Sb227)</name>
    <dbReference type="NCBI Taxonomy" id="300268"/>
    <lineage>
        <taxon>Bacteria</taxon>
        <taxon>Pseudomonadati</taxon>
        <taxon>Pseudomonadota</taxon>
        <taxon>Gammaproteobacteria</taxon>
        <taxon>Enterobacterales</taxon>
        <taxon>Enterobacteriaceae</taxon>
        <taxon>Shigella</taxon>
    </lineage>
</organism>
<comment type="function">
    <text evidence="1">One of the primary rRNA binding proteins, this protein initially binds near the 5'-end of the 23S rRNA. It is important during the early stages of 50S assembly. It makes multiple contacts with different domains of the 23S rRNA in the assembled 50S subunit and ribosome.</text>
</comment>
<comment type="function">
    <text evidence="1">Forms part of the polypeptide exit tunnel.</text>
</comment>
<comment type="subunit">
    <text evidence="1">Part of the 50S ribosomal subunit.</text>
</comment>
<comment type="similarity">
    <text evidence="1">Belongs to the universal ribosomal protein uL4 family.</text>
</comment>
<sequence length="201" mass="22087">MELVLKDAQSALTVSETTFGRDFNEALVHQVVVAYAAGARQGTRAQKTRAEVTGSGKKPWRQKGTGRARSGSIKSPIWRSGGVTFAARPQDHSQKVNKKMYRGALKSILSELVRQDRLIVVEKFSVEAPKTKLLAQKLKDMALEDVLIITGELDENLFLAARNLHKVDVRDATGIDPVSLIAFDKVVMTADAVKQVEEMLA</sequence>
<accession>Q31VV7</accession>
<name>RL4_SHIBS</name>
<reference key="1">
    <citation type="journal article" date="2005" name="Nucleic Acids Res.">
        <title>Genome dynamics and diversity of Shigella species, the etiologic agents of bacillary dysentery.</title>
        <authorList>
            <person name="Yang F."/>
            <person name="Yang J."/>
            <person name="Zhang X."/>
            <person name="Chen L."/>
            <person name="Jiang Y."/>
            <person name="Yan Y."/>
            <person name="Tang X."/>
            <person name="Wang J."/>
            <person name="Xiong Z."/>
            <person name="Dong J."/>
            <person name="Xue Y."/>
            <person name="Zhu Y."/>
            <person name="Xu X."/>
            <person name="Sun L."/>
            <person name="Chen S."/>
            <person name="Nie H."/>
            <person name="Peng J."/>
            <person name="Xu J."/>
            <person name="Wang Y."/>
            <person name="Yuan Z."/>
            <person name="Wen Y."/>
            <person name="Yao Z."/>
            <person name="Shen Y."/>
            <person name="Qiang B."/>
            <person name="Hou Y."/>
            <person name="Yu J."/>
            <person name="Jin Q."/>
        </authorList>
    </citation>
    <scope>NUCLEOTIDE SEQUENCE [LARGE SCALE GENOMIC DNA]</scope>
    <source>
        <strain>Sb227</strain>
    </source>
</reference>
<protein>
    <recommendedName>
        <fullName evidence="1">Large ribosomal subunit protein uL4</fullName>
    </recommendedName>
    <alternativeName>
        <fullName evidence="3">50S ribosomal protein L4</fullName>
    </alternativeName>
</protein>